<keyword id="KW-0030">Aminoacyl-tRNA synthetase</keyword>
<keyword id="KW-0067">ATP-binding</keyword>
<keyword id="KW-0963">Cytoplasm</keyword>
<keyword id="KW-0436">Ligase</keyword>
<keyword id="KW-0479">Metal-binding</keyword>
<keyword id="KW-0547">Nucleotide-binding</keyword>
<keyword id="KW-0648">Protein biosynthesis</keyword>
<keyword id="KW-1185">Reference proteome</keyword>
<keyword id="KW-0694">RNA-binding</keyword>
<keyword id="KW-0820">tRNA-binding</keyword>
<keyword id="KW-0862">Zinc</keyword>
<feature type="chain" id="PRO_0000075249" description="Alanine--tRNA ligase">
    <location>
        <begin position="1"/>
        <end position="855"/>
    </location>
</feature>
<feature type="binding site" evidence="1">
    <location>
        <position position="555"/>
    </location>
    <ligand>
        <name>Zn(2+)</name>
        <dbReference type="ChEBI" id="CHEBI:29105"/>
    </ligand>
</feature>
<feature type="binding site" evidence="1">
    <location>
        <position position="559"/>
    </location>
    <ligand>
        <name>Zn(2+)</name>
        <dbReference type="ChEBI" id="CHEBI:29105"/>
    </ligand>
</feature>
<feature type="binding site" evidence="1">
    <location>
        <position position="657"/>
    </location>
    <ligand>
        <name>Zn(2+)</name>
        <dbReference type="ChEBI" id="CHEBI:29105"/>
    </ligand>
</feature>
<feature type="binding site" evidence="1">
    <location>
        <position position="661"/>
    </location>
    <ligand>
        <name>Zn(2+)</name>
        <dbReference type="ChEBI" id="CHEBI:29105"/>
    </ligand>
</feature>
<gene>
    <name evidence="1" type="primary">alaS</name>
    <name type="ordered locus">WS0324</name>
</gene>
<sequence length="855" mass="95149">MDIRKLFLDYFASKGHAVYESMPLVPDDPTLLFTNAGMVQFKDIFTGKVPAPTNPRATSCQLCIRAGGKHNDLENVGYTSRHHTLFEMLGNFSFGDYFKEQAIDHAWEFVTEVLGFSKEVLWVTVHESDDEAFELWQKHVDASRIKRMGDKDNFWQMGDTGACGPCSEIFVDQGEEKFHGSEDYFGGDGDRFLEIWNLVFMQYERSSDGTLTPLPKPSIDTGMGLERVAALKEGKSSNFDSSLFMPMIRKVEELTGKPYHYESGASYRVIADHIRSICFLLAQGVNFDKEGRGYVLRRILRRAVRHGYLLGLNAPFLHEVAEVVCGQMGDHYGYLKEKREHIKRLTFQEEERFFATIAGGMEVFKKELEKTQSVFSGEAAFKLYDTFGFPLDLTEDMLREKGIRVDLAAFEACMKEQRARAKASWKGSGDELKEGDFALLLEAFPSNSFVGYEKEAHTSKLLAILNRDYKRVSSLGAGESGFVMLEETPFYAESGGQCGDEGELRARGRIVAQVQGTKKYFGLNLSRIEALDEICEGETLEAVVSRERLEVQKHHSATHLLHAILRQKLGDHVAQAGSLVEKDRLRFDFSHPKALTHEEVGMVEEEVNRLISLSIPSRTREMRVDEAKASGAMALFGEKYGDLVRVVDFGEASVELCGGTHVENSAHIGSFYITKESGVSAGVRRIEAVCGMAAYHYGKEALQEIAEAKEILKAKELKLGIEKLKEQVRELKSEMSALSSSKSGAISEGVMMGETRVIVETLEAGDIKNSIDEIKNRYEKVAVLLLQVKEEKVMLAAGVKGEDRIKAGAWIKEIAPILGGGGGGRDDFAQAGGKDASKADEALQSAKNYALERLA</sequence>
<evidence type="ECO:0000255" key="1">
    <source>
        <dbReference type="HAMAP-Rule" id="MF_00036"/>
    </source>
</evidence>
<dbReference type="EC" id="6.1.1.7" evidence="1"/>
<dbReference type="EMBL" id="BX571657">
    <property type="protein sequence ID" value="CAE09474.1"/>
    <property type="molecule type" value="Genomic_DNA"/>
</dbReference>
<dbReference type="RefSeq" id="WP_011138274.1">
    <property type="nucleotide sequence ID" value="NC_005090.1"/>
</dbReference>
<dbReference type="SMR" id="Q7MAD3"/>
<dbReference type="STRING" id="273121.WS0324"/>
<dbReference type="KEGG" id="wsu:WS0324"/>
<dbReference type="eggNOG" id="COG0013">
    <property type="taxonomic scope" value="Bacteria"/>
</dbReference>
<dbReference type="HOGENOM" id="CLU_004485_1_1_7"/>
<dbReference type="Proteomes" id="UP000000422">
    <property type="component" value="Chromosome"/>
</dbReference>
<dbReference type="GO" id="GO:0005829">
    <property type="term" value="C:cytosol"/>
    <property type="evidence" value="ECO:0007669"/>
    <property type="project" value="TreeGrafter"/>
</dbReference>
<dbReference type="GO" id="GO:0004813">
    <property type="term" value="F:alanine-tRNA ligase activity"/>
    <property type="evidence" value="ECO:0007669"/>
    <property type="project" value="UniProtKB-UniRule"/>
</dbReference>
<dbReference type="GO" id="GO:0002161">
    <property type="term" value="F:aminoacyl-tRNA deacylase activity"/>
    <property type="evidence" value="ECO:0007669"/>
    <property type="project" value="TreeGrafter"/>
</dbReference>
<dbReference type="GO" id="GO:0005524">
    <property type="term" value="F:ATP binding"/>
    <property type="evidence" value="ECO:0007669"/>
    <property type="project" value="UniProtKB-UniRule"/>
</dbReference>
<dbReference type="GO" id="GO:0000049">
    <property type="term" value="F:tRNA binding"/>
    <property type="evidence" value="ECO:0007669"/>
    <property type="project" value="UniProtKB-KW"/>
</dbReference>
<dbReference type="GO" id="GO:0008270">
    <property type="term" value="F:zinc ion binding"/>
    <property type="evidence" value="ECO:0007669"/>
    <property type="project" value="UniProtKB-UniRule"/>
</dbReference>
<dbReference type="GO" id="GO:0006419">
    <property type="term" value="P:alanyl-tRNA aminoacylation"/>
    <property type="evidence" value="ECO:0007669"/>
    <property type="project" value="UniProtKB-UniRule"/>
</dbReference>
<dbReference type="GO" id="GO:0045892">
    <property type="term" value="P:negative regulation of DNA-templated transcription"/>
    <property type="evidence" value="ECO:0007669"/>
    <property type="project" value="TreeGrafter"/>
</dbReference>
<dbReference type="CDD" id="cd00673">
    <property type="entry name" value="AlaRS_core"/>
    <property type="match status" value="1"/>
</dbReference>
<dbReference type="FunFam" id="3.10.310.40:FF:000001">
    <property type="entry name" value="Alanine--tRNA ligase"/>
    <property type="match status" value="1"/>
</dbReference>
<dbReference type="FunFam" id="3.30.54.20:FF:000001">
    <property type="entry name" value="Alanine--tRNA ligase"/>
    <property type="match status" value="1"/>
</dbReference>
<dbReference type="FunFam" id="3.30.930.10:FF:000004">
    <property type="entry name" value="Alanine--tRNA ligase"/>
    <property type="match status" value="1"/>
</dbReference>
<dbReference type="FunFam" id="3.30.980.10:FF:000004">
    <property type="entry name" value="Alanine--tRNA ligase, cytoplasmic"/>
    <property type="match status" value="1"/>
</dbReference>
<dbReference type="Gene3D" id="2.40.30.130">
    <property type="match status" value="1"/>
</dbReference>
<dbReference type="Gene3D" id="3.10.310.40">
    <property type="match status" value="1"/>
</dbReference>
<dbReference type="Gene3D" id="3.30.54.20">
    <property type="match status" value="1"/>
</dbReference>
<dbReference type="Gene3D" id="3.30.930.10">
    <property type="entry name" value="Bira Bifunctional Protein, Domain 2"/>
    <property type="match status" value="1"/>
</dbReference>
<dbReference type="Gene3D" id="3.30.980.10">
    <property type="entry name" value="Threonyl-trna Synthetase, Chain A, domain 2"/>
    <property type="match status" value="1"/>
</dbReference>
<dbReference type="HAMAP" id="MF_00036_B">
    <property type="entry name" value="Ala_tRNA_synth_B"/>
    <property type="match status" value="1"/>
</dbReference>
<dbReference type="InterPro" id="IPR045864">
    <property type="entry name" value="aa-tRNA-synth_II/BPL/LPL"/>
</dbReference>
<dbReference type="InterPro" id="IPR002318">
    <property type="entry name" value="Ala-tRNA-lgiase_IIc"/>
</dbReference>
<dbReference type="InterPro" id="IPR018162">
    <property type="entry name" value="Ala-tRNA-ligase_IIc_anticod-bd"/>
</dbReference>
<dbReference type="InterPro" id="IPR018165">
    <property type="entry name" value="Ala-tRNA-synth_IIc_core"/>
</dbReference>
<dbReference type="InterPro" id="IPR018164">
    <property type="entry name" value="Ala-tRNA-synth_IIc_N"/>
</dbReference>
<dbReference type="InterPro" id="IPR050058">
    <property type="entry name" value="Ala-tRNA_ligase"/>
</dbReference>
<dbReference type="InterPro" id="IPR023033">
    <property type="entry name" value="Ala_tRNA_ligase_euk/bac"/>
</dbReference>
<dbReference type="InterPro" id="IPR003156">
    <property type="entry name" value="DHHA1_dom"/>
</dbReference>
<dbReference type="InterPro" id="IPR018163">
    <property type="entry name" value="Thr/Ala-tRNA-synth_IIc_edit"/>
</dbReference>
<dbReference type="InterPro" id="IPR009000">
    <property type="entry name" value="Transl_B-barrel_sf"/>
</dbReference>
<dbReference type="InterPro" id="IPR012947">
    <property type="entry name" value="tRNA_SAD"/>
</dbReference>
<dbReference type="NCBIfam" id="TIGR00344">
    <property type="entry name" value="alaS"/>
    <property type="match status" value="1"/>
</dbReference>
<dbReference type="PANTHER" id="PTHR11777:SF9">
    <property type="entry name" value="ALANINE--TRNA LIGASE, CYTOPLASMIC"/>
    <property type="match status" value="1"/>
</dbReference>
<dbReference type="PANTHER" id="PTHR11777">
    <property type="entry name" value="ALANYL-TRNA SYNTHETASE"/>
    <property type="match status" value="1"/>
</dbReference>
<dbReference type="Pfam" id="PF02272">
    <property type="entry name" value="DHHA1"/>
    <property type="match status" value="1"/>
</dbReference>
<dbReference type="Pfam" id="PF01411">
    <property type="entry name" value="tRNA-synt_2c"/>
    <property type="match status" value="1"/>
</dbReference>
<dbReference type="Pfam" id="PF07973">
    <property type="entry name" value="tRNA_SAD"/>
    <property type="match status" value="1"/>
</dbReference>
<dbReference type="PRINTS" id="PR00980">
    <property type="entry name" value="TRNASYNTHALA"/>
</dbReference>
<dbReference type="SMART" id="SM00863">
    <property type="entry name" value="tRNA_SAD"/>
    <property type="match status" value="1"/>
</dbReference>
<dbReference type="SUPFAM" id="SSF55681">
    <property type="entry name" value="Class II aaRS and biotin synthetases"/>
    <property type="match status" value="1"/>
</dbReference>
<dbReference type="SUPFAM" id="SSF101353">
    <property type="entry name" value="Putative anticodon-binding domain of alanyl-tRNA synthetase (AlaRS)"/>
    <property type="match status" value="1"/>
</dbReference>
<dbReference type="SUPFAM" id="SSF55186">
    <property type="entry name" value="ThrRS/AlaRS common domain"/>
    <property type="match status" value="1"/>
</dbReference>
<dbReference type="SUPFAM" id="SSF50447">
    <property type="entry name" value="Translation proteins"/>
    <property type="match status" value="1"/>
</dbReference>
<dbReference type="PROSITE" id="PS50860">
    <property type="entry name" value="AA_TRNA_LIGASE_II_ALA"/>
    <property type="match status" value="1"/>
</dbReference>
<accession>Q7MAD3</accession>
<comment type="function">
    <text evidence="1">Catalyzes the attachment of alanine to tRNA(Ala) in a two-step reaction: alanine is first activated by ATP to form Ala-AMP and then transferred to the acceptor end of tRNA(Ala). Also edits incorrectly charged Ser-tRNA(Ala) and Gly-tRNA(Ala) via its editing domain.</text>
</comment>
<comment type="catalytic activity">
    <reaction evidence="1">
        <text>tRNA(Ala) + L-alanine + ATP = L-alanyl-tRNA(Ala) + AMP + diphosphate</text>
        <dbReference type="Rhea" id="RHEA:12540"/>
        <dbReference type="Rhea" id="RHEA-COMP:9657"/>
        <dbReference type="Rhea" id="RHEA-COMP:9923"/>
        <dbReference type="ChEBI" id="CHEBI:30616"/>
        <dbReference type="ChEBI" id="CHEBI:33019"/>
        <dbReference type="ChEBI" id="CHEBI:57972"/>
        <dbReference type="ChEBI" id="CHEBI:78442"/>
        <dbReference type="ChEBI" id="CHEBI:78497"/>
        <dbReference type="ChEBI" id="CHEBI:456215"/>
        <dbReference type="EC" id="6.1.1.7"/>
    </reaction>
</comment>
<comment type="cofactor">
    <cofactor evidence="1">
        <name>Zn(2+)</name>
        <dbReference type="ChEBI" id="CHEBI:29105"/>
    </cofactor>
    <text evidence="1">Binds 1 zinc ion per subunit.</text>
</comment>
<comment type="subcellular location">
    <subcellularLocation>
        <location evidence="1">Cytoplasm</location>
    </subcellularLocation>
</comment>
<comment type="domain">
    <text evidence="1">Consists of three domains; the N-terminal catalytic domain, the editing domain and the C-terminal C-Ala domain. The editing domain removes incorrectly charged amino acids, while the C-Ala domain, along with tRNA(Ala), serves as a bridge to cooperatively bring together the editing and aminoacylation centers thus stimulating deacylation of misacylated tRNAs.</text>
</comment>
<comment type="similarity">
    <text evidence="1">Belongs to the class-II aminoacyl-tRNA synthetase family.</text>
</comment>
<proteinExistence type="inferred from homology"/>
<organism>
    <name type="scientific">Wolinella succinogenes (strain ATCC 29543 / DSM 1740 / CCUG 13145 / JCM 31913 / LMG 7466 / NCTC 11488 / FDC 602W)</name>
    <name type="common">Vibrio succinogenes</name>
    <dbReference type="NCBI Taxonomy" id="273121"/>
    <lineage>
        <taxon>Bacteria</taxon>
        <taxon>Pseudomonadati</taxon>
        <taxon>Campylobacterota</taxon>
        <taxon>Epsilonproteobacteria</taxon>
        <taxon>Campylobacterales</taxon>
        <taxon>Helicobacteraceae</taxon>
        <taxon>Wolinella</taxon>
    </lineage>
</organism>
<protein>
    <recommendedName>
        <fullName evidence="1">Alanine--tRNA ligase</fullName>
        <ecNumber evidence="1">6.1.1.7</ecNumber>
    </recommendedName>
    <alternativeName>
        <fullName evidence="1">Alanyl-tRNA synthetase</fullName>
        <shortName evidence="1">AlaRS</shortName>
    </alternativeName>
</protein>
<name>SYA_WOLSU</name>
<reference key="1">
    <citation type="journal article" date="2003" name="Proc. Natl. Acad. Sci. U.S.A.">
        <title>Complete genome sequence and analysis of Wolinella succinogenes.</title>
        <authorList>
            <person name="Baar C."/>
            <person name="Eppinger M."/>
            <person name="Raddatz G."/>
            <person name="Simon J."/>
            <person name="Lanz C."/>
            <person name="Klimmek O."/>
            <person name="Nandakumar R."/>
            <person name="Gross R."/>
            <person name="Rosinus A."/>
            <person name="Keller H."/>
            <person name="Jagtap P."/>
            <person name="Linke B."/>
            <person name="Meyer F."/>
            <person name="Lederer H."/>
            <person name="Schuster S.C."/>
        </authorList>
    </citation>
    <scope>NUCLEOTIDE SEQUENCE [LARGE SCALE GENOMIC DNA]</scope>
    <source>
        <strain>ATCC 29543 / DSM 1740 / CCUG 13145 / JCM 31913 / LMG 7466 / NCTC 11488 / FDC 602W</strain>
    </source>
</reference>